<sequence length="275" mass="29301">MAVRCCSSMASASVVLFFVVVGMSASMVSGCDRCVRRSKAGFRDSSIALNAGSCGYGSLAASFNGGHLAAASPALFRGGVGCGACFQVRCKDGKLCSTAGAKVVVTDEARSTNRTDLVLSAAAYAAMARPGMAAQLRTRRAVDVEYKRVPCEYAAGRNLSIRVEEKSRPPRELSIRFLYQGGQTDIVAVDVATVGSSNWKFMTRDYGPAWSTAQAPAGPLQFRVVVTGGYDGKWVWADGEVLPRRWTAGRVYDAGVQIADVAQEGCYPCDTQEWK</sequence>
<keyword id="KW-0325">Glycoprotein</keyword>
<keyword id="KW-1185">Reference proteome</keyword>
<keyword id="KW-0964">Secreted</keyword>
<keyword id="KW-0732">Signal</keyword>
<proteinExistence type="evidence at transcript level"/>
<evidence type="ECO:0000255" key="1"/>
<evidence type="ECO:0000255" key="2">
    <source>
        <dbReference type="PROSITE-ProRule" id="PRU00078"/>
    </source>
</evidence>
<evidence type="ECO:0000255" key="3">
    <source>
        <dbReference type="PROSITE-ProRule" id="PRU00079"/>
    </source>
</evidence>
<evidence type="ECO:0000269" key="4">
    <source>
    </source>
</evidence>
<evidence type="ECO:0000305" key="5"/>
<feature type="signal peptide" evidence="1">
    <location>
        <begin position="1"/>
        <end position="30"/>
    </location>
</feature>
<feature type="chain" id="PRO_0000252099" description="Expansin-like A2">
    <location>
        <begin position="31"/>
        <end position="275"/>
    </location>
</feature>
<feature type="domain" description="Expansin-like EG45" evidence="3">
    <location>
        <begin position="51"/>
        <end position="156"/>
    </location>
</feature>
<feature type="domain" description="Expansin-like CBD" evidence="2">
    <location>
        <begin position="171"/>
        <end position="254"/>
    </location>
</feature>
<feature type="glycosylation site" description="N-linked (GlcNAc...) asparagine" evidence="1">
    <location>
        <position position="113"/>
    </location>
</feature>
<feature type="glycosylation site" description="N-linked (GlcNAc...) asparagine" evidence="1">
    <location>
        <position position="158"/>
    </location>
</feature>
<organism>
    <name type="scientific">Oryza sativa subsp. japonica</name>
    <name type="common">Rice</name>
    <dbReference type="NCBI Taxonomy" id="39947"/>
    <lineage>
        <taxon>Eukaryota</taxon>
        <taxon>Viridiplantae</taxon>
        <taxon>Streptophyta</taxon>
        <taxon>Embryophyta</taxon>
        <taxon>Tracheophyta</taxon>
        <taxon>Spermatophyta</taxon>
        <taxon>Magnoliopsida</taxon>
        <taxon>Liliopsida</taxon>
        <taxon>Poales</taxon>
        <taxon>Poaceae</taxon>
        <taxon>BOP clade</taxon>
        <taxon>Oryzoideae</taxon>
        <taxon>Oryzeae</taxon>
        <taxon>Oryzinae</taxon>
        <taxon>Oryza</taxon>
        <taxon>Oryza sativa</taxon>
    </lineage>
</organism>
<gene>
    <name type="primary">EXLA2</name>
    <name type="synonym">EXPL2</name>
    <name type="ordered locus">Os10g0542400</name>
    <name type="ordered locus">LOC_Os10g39640</name>
    <name type="ORF">OSJNBb0015I11.10</name>
</gene>
<reference key="1">
    <citation type="journal article" date="2003" name="Science">
        <title>In-depth view of structure, activity, and evolution of rice chromosome 10.</title>
        <authorList>
            <person name="Yu Y."/>
            <person name="Rambo T."/>
            <person name="Currie J."/>
            <person name="Saski C."/>
            <person name="Kim H.-R."/>
            <person name="Collura K."/>
            <person name="Thompson S."/>
            <person name="Simmons J."/>
            <person name="Yang T.-J."/>
            <person name="Nah G."/>
            <person name="Patel A.J."/>
            <person name="Thurmond S."/>
            <person name="Henry D."/>
            <person name="Oates R."/>
            <person name="Palmer M."/>
            <person name="Pries G."/>
            <person name="Gibson J."/>
            <person name="Anderson H."/>
            <person name="Paradkar M."/>
            <person name="Crane L."/>
            <person name="Dale J."/>
            <person name="Carver M.B."/>
            <person name="Wood T."/>
            <person name="Frisch D."/>
            <person name="Engler F."/>
            <person name="Soderlund C."/>
            <person name="Palmer L.E."/>
            <person name="Teytelman L."/>
            <person name="Nascimento L."/>
            <person name="De la Bastide M."/>
            <person name="Spiegel L."/>
            <person name="Ware D."/>
            <person name="O'Shaughnessy A."/>
            <person name="Dike S."/>
            <person name="Dedhia N."/>
            <person name="Preston R."/>
            <person name="Huang E."/>
            <person name="Ferraro K."/>
            <person name="Kuit K."/>
            <person name="Miller B."/>
            <person name="Zutavern T."/>
            <person name="Katzenberger F."/>
            <person name="Muller S."/>
            <person name="Balija V."/>
            <person name="Martienssen R.A."/>
            <person name="Stein L."/>
            <person name="Minx P."/>
            <person name="Johnson D."/>
            <person name="Cordum H."/>
            <person name="Mardis E."/>
            <person name="Cheng Z."/>
            <person name="Jiang J."/>
            <person name="Wilson R."/>
            <person name="McCombie W.R."/>
            <person name="Wing R.A."/>
            <person name="Yuan Q."/>
            <person name="Ouyang S."/>
            <person name="Liu J."/>
            <person name="Jones K.M."/>
            <person name="Gansberger K."/>
            <person name="Moffat K."/>
            <person name="Hill J."/>
            <person name="Tsitrin T."/>
            <person name="Overton L."/>
            <person name="Bera J."/>
            <person name="Kim M."/>
            <person name="Jin S."/>
            <person name="Tallon L."/>
            <person name="Ciecko A."/>
            <person name="Pai G."/>
            <person name="Van Aken S."/>
            <person name="Utterback T."/>
            <person name="Reidmuller S."/>
            <person name="Bormann J."/>
            <person name="Feldblyum T."/>
            <person name="Hsiao J."/>
            <person name="Zismann V."/>
            <person name="Blunt S."/>
            <person name="de Vazeille A.R."/>
            <person name="Shaffer T."/>
            <person name="Koo H."/>
            <person name="Suh B."/>
            <person name="Yang Q."/>
            <person name="Haas B."/>
            <person name="Peterson J."/>
            <person name="Pertea M."/>
            <person name="Volfovsky N."/>
            <person name="Wortman J."/>
            <person name="White O."/>
            <person name="Salzberg S.L."/>
            <person name="Fraser C.M."/>
            <person name="Buell C.R."/>
            <person name="Messing J."/>
            <person name="Song R."/>
            <person name="Fuks G."/>
            <person name="Llaca V."/>
            <person name="Kovchak S."/>
            <person name="Young S."/>
            <person name="Bowers J.E."/>
            <person name="Paterson A.H."/>
            <person name="Johns M.A."/>
            <person name="Mao L."/>
            <person name="Pan H."/>
            <person name="Dean R.A."/>
        </authorList>
    </citation>
    <scope>NUCLEOTIDE SEQUENCE [LARGE SCALE GENOMIC DNA]</scope>
    <source>
        <strain>cv. Nipponbare</strain>
    </source>
</reference>
<reference key="2">
    <citation type="journal article" date="2005" name="Nature">
        <title>The map-based sequence of the rice genome.</title>
        <authorList>
            <consortium name="International rice genome sequencing project (IRGSP)"/>
        </authorList>
    </citation>
    <scope>NUCLEOTIDE SEQUENCE [LARGE SCALE GENOMIC DNA]</scope>
    <source>
        <strain>cv. Nipponbare</strain>
    </source>
</reference>
<reference key="3">
    <citation type="journal article" date="2008" name="Nucleic Acids Res.">
        <title>The rice annotation project database (RAP-DB): 2008 update.</title>
        <authorList>
            <consortium name="The rice annotation project (RAP)"/>
        </authorList>
    </citation>
    <scope>GENOME REANNOTATION</scope>
    <source>
        <strain>cv. Nipponbare</strain>
    </source>
</reference>
<reference key="4">
    <citation type="journal article" date="2013" name="Rice">
        <title>Improvement of the Oryza sativa Nipponbare reference genome using next generation sequence and optical map data.</title>
        <authorList>
            <person name="Kawahara Y."/>
            <person name="de la Bastide M."/>
            <person name="Hamilton J.P."/>
            <person name="Kanamori H."/>
            <person name="McCombie W.R."/>
            <person name="Ouyang S."/>
            <person name="Schwartz D.C."/>
            <person name="Tanaka T."/>
            <person name="Wu J."/>
            <person name="Zhou S."/>
            <person name="Childs K.L."/>
            <person name="Davidson R.M."/>
            <person name="Lin H."/>
            <person name="Quesada-Ocampo L."/>
            <person name="Vaillancourt B."/>
            <person name="Sakai H."/>
            <person name="Lee S.S."/>
            <person name="Kim J."/>
            <person name="Numa H."/>
            <person name="Itoh T."/>
            <person name="Buell C.R."/>
            <person name="Matsumoto T."/>
        </authorList>
    </citation>
    <scope>GENOME REANNOTATION</scope>
    <source>
        <strain>cv. Nipponbare</strain>
    </source>
</reference>
<reference key="5">
    <citation type="journal article" date="2003" name="Science">
        <title>Collection, mapping, and annotation of over 28,000 cDNA clones from japonica rice.</title>
        <authorList>
            <consortium name="The rice full-length cDNA consortium"/>
        </authorList>
    </citation>
    <scope>NUCLEOTIDE SEQUENCE [LARGE SCALE MRNA]</scope>
    <source>
        <strain>cv. Nipponbare</strain>
    </source>
</reference>
<reference key="6">
    <citation type="journal article" date="2002" name="Plant Physiol.">
        <title>Expression of alpha-expansin and expansin-like genes in deepwater rice.</title>
        <authorList>
            <person name="Lee Y."/>
            <person name="Kende H."/>
        </authorList>
    </citation>
    <scope>DEVELOPMENTAL STAGE</scope>
    <scope>INDUCTION</scope>
</reference>
<reference key="7">
    <citation type="journal article" date="2004" name="Plant Mol. Biol.">
        <title>Nomenclature for members of the expansin superfamily of genes and proteins.</title>
        <authorList>
            <person name="Kende H."/>
            <person name="Bradford K.J."/>
            <person name="Brummell D.A."/>
            <person name="Cho H.-T."/>
            <person name="Cosgrove D.J."/>
            <person name="Fleming A.J."/>
            <person name="Gehring C."/>
            <person name="Lee Y."/>
            <person name="McQueen-Mason S.J."/>
            <person name="Rose J.K.C."/>
            <person name="Voesenek L.A.C."/>
        </authorList>
    </citation>
    <scope>NOMENCLATURE</scope>
</reference>
<accession>Q7XCL0</accession>
<accession>B7ECF5</accession>
<accession>Q9FWF3</accession>
<dbReference type="EMBL" id="AC051633">
    <property type="protein sequence ID" value="AAG13596.1"/>
    <property type="molecule type" value="Genomic_DNA"/>
</dbReference>
<dbReference type="EMBL" id="DP000086">
    <property type="protein sequence ID" value="AAP54861.1"/>
    <property type="molecule type" value="Genomic_DNA"/>
</dbReference>
<dbReference type="EMBL" id="AP008216">
    <property type="protein sequence ID" value="BAF27108.1"/>
    <property type="molecule type" value="Genomic_DNA"/>
</dbReference>
<dbReference type="EMBL" id="AP014966">
    <property type="protein sequence ID" value="BAT11876.1"/>
    <property type="molecule type" value="Genomic_DNA"/>
</dbReference>
<dbReference type="EMBL" id="AK066611">
    <property type="protein sequence ID" value="BAG90052.1"/>
    <property type="molecule type" value="mRNA"/>
</dbReference>
<dbReference type="EMBL" id="AK068088">
    <property type="protein sequence ID" value="BAG90751.1"/>
    <property type="molecule type" value="mRNA"/>
</dbReference>
<dbReference type="RefSeq" id="XP_015614226.1">
    <property type="nucleotide sequence ID" value="XM_015758740.1"/>
</dbReference>
<dbReference type="SMR" id="Q7XCL0"/>
<dbReference type="FunCoup" id="Q7XCL0">
    <property type="interactions" value="43"/>
</dbReference>
<dbReference type="STRING" id="39947.Q7XCL0"/>
<dbReference type="GlyCosmos" id="Q7XCL0">
    <property type="glycosylation" value="2 sites, No reported glycans"/>
</dbReference>
<dbReference type="PaxDb" id="39947-Q7XCL0"/>
<dbReference type="EnsemblPlants" id="Os10t0542400-01">
    <property type="protein sequence ID" value="Os10t0542400-01"/>
    <property type="gene ID" value="Os10g0542400"/>
</dbReference>
<dbReference type="EnsemblPlants" id="Os10t0542400-02">
    <property type="protein sequence ID" value="Os10t0542400-02"/>
    <property type="gene ID" value="Os10g0542400"/>
</dbReference>
<dbReference type="Gramene" id="Os10t0542400-01">
    <property type="protein sequence ID" value="Os10t0542400-01"/>
    <property type="gene ID" value="Os10g0542400"/>
</dbReference>
<dbReference type="Gramene" id="Os10t0542400-02">
    <property type="protein sequence ID" value="Os10t0542400-02"/>
    <property type="gene ID" value="Os10g0542400"/>
</dbReference>
<dbReference type="KEGG" id="dosa:Os10g0542400"/>
<dbReference type="eggNOG" id="ENOG502QSGZ">
    <property type="taxonomic scope" value="Eukaryota"/>
</dbReference>
<dbReference type="HOGENOM" id="CLU_027462_3_1_1"/>
<dbReference type="InParanoid" id="Q7XCL0"/>
<dbReference type="OMA" id="CRIPCEY"/>
<dbReference type="OrthoDB" id="5823761at2759"/>
<dbReference type="Proteomes" id="UP000000763">
    <property type="component" value="Chromosome 10"/>
</dbReference>
<dbReference type="Proteomes" id="UP000059680">
    <property type="component" value="Chromosome 10"/>
</dbReference>
<dbReference type="GO" id="GO:0005576">
    <property type="term" value="C:extracellular region"/>
    <property type="evidence" value="ECO:0007669"/>
    <property type="project" value="UniProtKB-SubCell"/>
</dbReference>
<dbReference type="GO" id="GO:0009828">
    <property type="term" value="P:plant-type cell wall loosening"/>
    <property type="evidence" value="ECO:0000250"/>
    <property type="project" value="UniProtKB"/>
</dbReference>
<dbReference type="CDD" id="cd22276">
    <property type="entry name" value="DPBB_EXLA_N"/>
    <property type="match status" value="1"/>
</dbReference>
<dbReference type="Gene3D" id="2.60.40.760">
    <property type="entry name" value="Expansin, cellulose-binding-like domain"/>
    <property type="match status" value="1"/>
</dbReference>
<dbReference type="Gene3D" id="2.40.40.10">
    <property type="entry name" value="RlpA-like domain"/>
    <property type="match status" value="1"/>
</dbReference>
<dbReference type="InterPro" id="IPR007118">
    <property type="entry name" value="Expan_Lol_pI"/>
</dbReference>
<dbReference type="InterPro" id="IPR007112">
    <property type="entry name" value="Expansin/allergen_DPBB_dom"/>
</dbReference>
<dbReference type="InterPro" id="IPR007117">
    <property type="entry name" value="Expansin_CBD"/>
</dbReference>
<dbReference type="InterPro" id="IPR036749">
    <property type="entry name" value="Expansin_CBD_sf"/>
</dbReference>
<dbReference type="InterPro" id="IPR009009">
    <property type="entry name" value="RlpA-like_DPBB"/>
</dbReference>
<dbReference type="InterPro" id="IPR036908">
    <property type="entry name" value="RlpA-like_sf"/>
</dbReference>
<dbReference type="PANTHER" id="PTHR31692">
    <property type="entry name" value="EXPANSIN-B3"/>
    <property type="match status" value="1"/>
</dbReference>
<dbReference type="PANTHER" id="PTHR31692:SF4">
    <property type="entry name" value="EXPANSIN-LIKE A1-RELATED"/>
    <property type="match status" value="1"/>
</dbReference>
<dbReference type="Pfam" id="PF03330">
    <property type="entry name" value="DPBB_1"/>
    <property type="match status" value="1"/>
</dbReference>
<dbReference type="Pfam" id="PF01357">
    <property type="entry name" value="Expansin_C"/>
    <property type="match status" value="1"/>
</dbReference>
<dbReference type="PRINTS" id="PR01225">
    <property type="entry name" value="EXPANSNFAMLY"/>
</dbReference>
<dbReference type="SMART" id="SM00837">
    <property type="entry name" value="DPBB_1"/>
    <property type="match status" value="1"/>
</dbReference>
<dbReference type="SUPFAM" id="SSF50685">
    <property type="entry name" value="Barwin-like endoglucanases"/>
    <property type="match status" value="1"/>
</dbReference>
<dbReference type="SUPFAM" id="SSF49590">
    <property type="entry name" value="PHL pollen allergen"/>
    <property type="match status" value="1"/>
</dbReference>
<dbReference type="PROSITE" id="PS50843">
    <property type="entry name" value="EXPANSIN_CBD"/>
    <property type="match status" value="1"/>
</dbReference>
<dbReference type="PROSITE" id="PS50842">
    <property type="entry name" value="EXPANSIN_EG45"/>
    <property type="match status" value="1"/>
</dbReference>
<name>EXLA2_ORYSJ</name>
<protein>
    <recommendedName>
        <fullName>Expansin-like A2</fullName>
    </recommendedName>
    <alternativeName>
        <fullName>OsEXLA2</fullName>
    </alternativeName>
    <alternativeName>
        <fullName>OsEXPL2</fullName>
    </alternativeName>
    <alternativeName>
        <fullName>OsaEXPb2.2</fullName>
    </alternativeName>
</protein>
<comment type="subcellular location">
    <subcellularLocation>
        <location evidence="5">Secreted</location>
    </subcellularLocation>
</comment>
<comment type="developmental stage">
    <text evidence="4">Expressed in the growing regions of coleoptiles, internodes, and leaves.</text>
</comment>
<comment type="induction">
    <text evidence="4">Down-regulated by gibberellin (GA3).</text>
</comment>
<comment type="similarity">
    <text evidence="5">Belongs to the expansin family. Expansin-like A subfamily.</text>
</comment>
<comment type="online information" name="EXPANSIN homepage">
    <link uri="https://www.dept.psu.edu/biology/groups/expansins/index.htm"/>
</comment>